<organism>
    <name type="scientific">Brucella canis (strain ATCC 23365 / NCTC 10854 / RM-666)</name>
    <dbReference type="NCBI Taxonomy" id="483179"/>
    <lineage>
        <taxon>Bacteria</taxon>
        <taxon>Pseudomonadati</taxon>
        <taxon>Pseudomonadota</taxon>
        <taxon>Alphaproteobacteria</taxon>
        <taxon>Hyphomicrobiales</taxon>
        <taxon>Brucellaceae</taxon>
        <taxon>Brucella/Ochrobactrum group</taxon>
        <taxon>Brucella</taxon>
    </lineage>
</organism>
<keyword id="KW-0963">Cytoplasm</keyword>
<keyword id="KW-0274">FAD</keyword>
<keyword id="KW-0285">Flavoprotein</keyword>
<keyword id="KW-0489">Methyltransferase</keyword>
<keyword id="KW-0520">NAD</keyword>
<keyword id="KW-0521">NADP</keyword>
<keyword id="KW-1185">Reference proteome</keyword>
<keyword id="KW-0808">Transferase</keyword>
<keyword id="KW-0819">tRNA processing</keyword>
<protein>
    <recommendedName>
        <fullName evidence="1">Methylenetetrahydrofolate--tRNA-(uracil-5-)-methyltransferase TrmFO</fullName>
        <ecNumber evidence="1">2.1.1.74</ecNumber>
    </recommendedName>
    <alternativeName>
        <fullName evidence="1">Folate-dependent tRNA (uracil-5-)-methyltransferase</fullName>
    </alternativeName>
    <alternativeName>
        <fullName evidence="1">Folate-dependent tRNA(M-5-U54)-methyltransferase</fullName>
    </alternativeName>
</protein>
<dbReference type="EC" id="2.1.1.74" evidence="1"/>
<dbReference type="EMBL" id="CP000872">
    <property type="protein sequence ID" value="ABX61970.1"/>
    <property type="molecule type" value="Genomic_DNA"/>
</dbReference>
<dbReference type="RefSeq" id="WP_004690788.1">
    <property type="nucleotide sequence ID" value="NC_010103.1"/>
</dbReference>
<dbReference type="SMR" id="A9MAR7"/>
<dbReference type="GeneID" id="55590600"/>
<dbReference type="KEGG" id="bcs:BCAN_A0908"/>
<dbReference type="HOGENOM" id="CLU_033057_1_0_5"/>
<dbReference type="PhylomeDB" id="A9MAR7"/>
<dbReference type="Proteomes" id="UP000001385">
    <property type="component" value="Chromosome I"/>
</dbReference>
<dbReference type="GO" id="GO:0005829">
    <property type="term" value="C:cytosol"/>
    <property type="evidence" value="ECO:0007669"/>
    <property type="project" value="TreeGrafter"/>
</dbReference>
<dbReference type="GO" id="GO:0050660">
    <property type="term" value="F:flavin adenine dinucleotide binding"/>
    <property type="evidence" value="ECO:0007669"/>
    <property type="project" value="UniProtKB-UniRule"/>
</dbReference>
<dbReference type="GO" id="GO:0047151">
    <property type="term" value="F:tRNA (uracil(54)-C5)-methyltransferase activity, 5,10-methylenetetrahydrofolate-dependent"/>
    <property type="evidence" value="ECO:0007669"/>
    <property type="project" value="UniProtKB-UniRule"/>
</dbReference>
<dbReference type="GO" id="GO:0030488">
    <property type="term" value="P:tRNA methylation"/>
    <property type="evidence" value="ECO:0007669"/>
    <property type="project" value="TreeGrafter"/>
</dbReference>
<dbReference type="GO" id="GO:0002098">
    <property type="term" value="P:tRNA wobble uridine modification"/>
    <property type="evidence" value="ECO:0007669"/>
    <property type="project" value="TreeGrafter"/>
</dbReference>
<dbReference type="Gene3D" id="3.50.50.60">
    <property type="entry name" value="FAD/NAD(P)-binding domain"/>
    <property type="match status" value="2"/>
</dbReference>
<dbReference type="HAMAP" id="MF_01037">
    <property type="entry name" value="TrmFO"/>
    <property type="match status" value="1"/>
</dbReference>
<dbReference type="InterPro" id="IPR036188">
    <property type="entry name" value="FAD/NAD-bd_sf"/>
</dbReference>
<dbReference type="InterPro" id="IPR002218">
    <property type="entry name" value="MnmG-rel"/>
</dbReference>
<dbReference type="InterPro" id="IPR020595">
    <property type="entry name" value="MnmG-rel_CS"/>
</dbReference>
<dbReference type="InterPro" id="IPR040131">
    <property type="entry name" value="MnmG_N"/>
</dbReference>
<dbReference type="InterPro" id="IPR004417">
    <property type="entry name" value="TrmFO"/>
</dbReference>
<dbReference type="NCBIfam" id="TIGR00137">
    <property type="entry name" value="gid_trmFO"/>
    <property type="match status" value="1"/>
</dbReference>
<dbReference type="NCBIfam" id="NF003739">
    <property type="entry name" value="PRK05335.1"/>
    <property type="match status" value="1"/>
</dbReference>
<dbReference type="PANTHER" id="PTHR11806">
    <property type="entry name" value="GLUCOSE INHIBITED DIVISION PROTEIN A"/>
    <property type="match status" value="1"/>
</dbReference>
<dbReference type="PANTHER" id="PTHR11806:SF2">
    <property type="entry name" value="METHYLENETETRAHYDROFOLATE--TRNA-(URACIL-5-)-METHYLTRANSFERASE TRMFO"/>
    <property type="match status" value="1"/>
</dbReference>
<dbReference type="Pfam" id="PF01134">
    <property type="entry name" value="GIDA"/>
    <property type="match status" value="1"/>
</dbReference>
<dbReference type="SUPFAM" id="SSF51905">
    <property type="entry name" value="FAD/NAD(P)-binding domain"/>
    <property type="match status" value="1"/>
</dbReference>
<dbReference type="PROSITE" id="PS01281">
    <property type="entry name" value="GIDA_2"/>
    <property type="match status" value="1"/>
</dbReference>
<evidence type="ECO:0000255" key="1">
    <source>
        <dbReference type="HAMAP-Rule" id="MF_01037"/>
    </source>
</evidence>
<name>TRMFO_BRUC2</name>
<comment type="function">
    <text evidence="1">Catalyzes the folate-dependent formation of 5-methyl-uridine at position 54 (M-5-U54) in all tRNAs.</text>
</comment>
<comment type="catalytic activity">
    <reaction evidence="1">
        <text>uridine(54) in tRNA + (6R)-5,10-methylene-5,6,7,8-tetrahydrofolate + NADH + H(+) = 5-methyluridine(54) in tRNA + (6S)-5,6,7,8-tetrahydrofolate + NAD(+)</text>
        <dbReference type="Rhea" id="RHEA:16873"/>
        <dbReference type="Rhea" id="RHEA-COMP:10167"/>
        <dbReference type="Rhea" id="RHEA-COMP:10193"/>
        <dbReference type="ChEBI" id="CHEBI:15378"/>
        <dbReference type="ChEBI" id="CHEBI:15636"/>
        <dbReference type="ChEBI" id="CHEBI:57453"/>
        <dbReference type="ChEBI" id="CHEBI:57540"/>
        <dbReference type="ChEBI" id="CHEBI:57945"/>
        <dbReference type="ChEBI" id="CHEBI:65315"/>
        <dbReference type="ChEBI" id="CHEBI:74447"/>
        <dbReference type="EC" id="2.1.1.74"/>
    </reaction>
</comment>
<comment type="catalytic activity">
    <reaction evidence="1">
        <text>uridine(54) in tRNA + (6R)-5,10-methylene-5,6,7,8-tetrahydrofolate + NADPH + H(+) = 5-methyluridine(54) in tRNA + (6S)-5,6,7,8-tetrahydrofolate + NADP(+)</text>
        <dbReference type="Rhea" id="RHEA:62372"/>
        <dbReference type="Rhea" id="RHEA-COMP:10167"/>
        <dbReference type="Rhea" id="RHEA-COMP:10193"/>
        <dbReference type="ChEBI" id="CHEBI:15378"/>
        <dbReference type="ChEBI" id="CHEBI:15636"/>
        <dbReference type="ChEBI" id="CHEBI:57453"/>
        <dbReference type="ChEBI" id="CHEBI:57783"/>
        <dbReference type="ChEBI" id="CHEBI:58349"/>
        <dbReference type="ChEBI" id="CHEBI:65315"/>
        <dbReference type="ChEBI" id="CHEBI:74447"/>
        <dbReference type="EC" id="2.1.1.74"/>
    </reaction>
</comment>
<comment type="cofactor">
    <cofactor evidence="1">
        <name>FAD</name>
        <dbReference type="ChEBI" id="CHEBI:57692"/>
    </cofactor>
</comment>
<comment type="subcellular location">
    <subcellularLocation>
        <location evidence="1">Cytoplasm</location>
    </subcellularLocation>
</comment>
<comment type="similarity">
    <text evidence="1">Belongs to the MnmG family. TrmFO subfamily.</text>
</comment>
<proteinExistence type="inferred from homology"/>
<sequence>MSNNTDLSPVHVIGGGLAGSEAAWQIAQAGVPVVLHEMRPVRGTDAHKTEQLAELVCSNSFRSDDAETNAVGVLHAEMRLAGSLIMACADAHQVPAGGALAVDREGFSQAVTARLEAHPLITIEREEITGLPPTEWGTTIIATGPLTAPSLAEAIAAETDADALAFFDAIAPIIHFDSINMDVCWFQSRYDKVGPGGTGKDYINCPMDEEQYEAFVAALIEGDKTDFKEWEGTPYFDGCLPIEVMAERGPETLRHGPMKPMGLTNAHNPTVKPYAVVQLRQDNALGTLYNMVGFQTKLKYGSQTGIFKMIPGLENAEFARLGGLHRNTYLNSPVLLDNVLRLKSRQTLRFAGQVTGCEGYVESSAIGLLAGRFTAAEKLSQAAVPPPPTTAFGALLGHITGGHIVTDDEPGKRSFQPMNVNFGLFPPVDVPKPEGKRLRGKEKTIAKKRALSARALADCRNWLSLY</sequence>
<feature type="chain" id="PRO_1000084284" description="Methylenetetrahydrofolate--tRNA-(uracil-5-)-methyltransferase TrmFO">
    <location>
        <begin position="1"/>
        <end position="466"/>
    </location>
</feature>
<feature type="binding site" evidence="1">
    <location>
        <begin position="14"/>
        <end position="19"/>
    </location>
    <ligand>
        <name>FAD</name>
        <dbReference type="ChEBI" id="CHEBI:57692"/>
    </ligand>
</feature>
<gene>
    <name evidence="1" type="primary">trmFO</name>
    <name type="synonym">gid</name>
    <name type="ordered locus">BCAN_A0908</name>
</gene>
<reference key="1">
    <citation type="submission" date="2007-10" db="EMBL/GenBank/DDBJ databases">
        <title>Brucella canis ATCC 23365 whole genome shotgun sequencing project.</title>
        <authorList>
            <person name="Setubal J.C."/>
            <person name="Bowns C."/>
            <person name="Boyle S."/>
            <person name="Crasta O.R."/>
            <person name="Czar M.J."/>
            <person name="Dharmanolla C."/>
            <person name="Gillespie J.J."/>
            <person name="Kenyon R.W."/>
            <person name="Lu J."/>
            <person name="Mane S."/>
            <person name="Mohapatra S."/>
            <person name="Nagrani S."/>
            <person name="Purkayastha A."/>
            <person name="Rajasimha H.K."/>
            <person name="Shallom J.M."/>
            <person name="Shallom S."/>
            <person name="Shukla M."/>
            <person name="Snyder E.E."/>
            <person name="Sobral B.W."/>
            <person name="Wattam A.R."/>
            <person name="Will R."/>
            <person name="Williams K."/>
            <person name="Yoo H."/>
            <person name="Bruce D."/>
            <person name="Detter C."/>
            <person name="Munk C."/>
            <person name="Brettin T.S."/>
        </authorList>
    </citation>
    <scope>NUCLEOTIDE SEQUENCE [LARGE SCALE GENOMIC DNA]</scope>
    <source>
        <strain>ATCC 23365 / NCTC 10854 / RM-666</strain>
    </source>
</reference>
<accession>A9MAR7</accession>